<protein>
    <recommendedName>
        <fullName>Calexcitin-1</fullName>
    </recommendedName>
</protein>
<feature type="chain" id="PRO_0000073841" description="Calexcitin-1">
    <location>
        <begin position="1"/>
        <end position="204"/>
    </location>
</feature>
<feature type="domain" description="EF-hand 1" evidence="1">
    <location>
        <begin position="25"/>
        <end position="61"/>
    </location>
</feature>
<feature type="domain" description="EF-hand 2" evidence="1">
    <location>
        <begin position="75"/>
        <end position="110"/>
    </location>
</feature>
<feature type="domain" description="EF-hand 3" evidence="1">
    <location>
        <begin position="115"/>
        <end position="150"/>
    </location>
</feature>
<feature type="binding site" evidence="1">
    <location>
        <position position="39"/>
    </location>
    <ligand>
        <name>Ca(2+)</name>
        <dbReference type="ChEBI" id="CHEBI:29108"/>
        <label>1</label>
    </ligand>
</feature>
<feature type="binding site" evidence="1">
    <location>
        <position position="41"/>
    </location>
    <ligand>
        <name>Ca(2+)</name>
        <dbReference type="ChEBI" id="CHEBI:29108"/>
        <label>1</label>
    </ligand>
</feature>
<feature type="binding site" evidence="1">
    <location>
        <position position="43"/>
    </location>
    <ligand>
        <name>Ca(2+)</name>
        <dbReference type="ChEBI" id="CHEBI:29108"/>
        <label>1</label>
    </ligand>
</feature>
<feature type="binding site" evidence="1">
    <location>
        <position position="45"/>
    </location>
    <ligand>
        <name>Ca(2+)</name>
        <dbReference type="ChEBI" id="CHEBI:29108"/>
        <label>1</label>
    </ligand>
</feature>
<feature type="binding site" evidence="1">
    <location>
        <position position="50"/>
    </location>
    <ligand>
        <name>Ca(2+)</name>
        <dbReference type="ChEBI" id="CHEBI:29108"/>
        <label>1</label>
    </ligand>
</feature>
<feature type="binding site" evidence="1">
    <location>
        <position position="88"/>
    </location>
    <ligand>
        <name>Ca(2+)</name>
        <dbReference type="ChEBI" id="CHEBI:29108"/>
        <label>2</label>
    </ligand>
</feature>
<feature type="binding site" evidence="1">
    <location>
        <position position="90"/>
    </location>
    <ligand>
        <name>Ca(2+)</name>
        <dbReference type="ChEBI" id="CHEBI:29108"/>
        <label>2</label>
    </ligand>
</feature>
<feature type="binding site" evidence="1">
    <location>
        <position position="92"/>
    </location>
    <ligand>
        <name>Ca(2+)</name>
        <dbReference type="ChEBI" id="CHEBI:29108"/>
        <label>2</label>
    </ligand>
</feature>
<feature type="binding site" evidence="1">
    <location>
        <position position="99"/>
    </location>
    <ligand>
        <name>Ca(2+)</name>
        <dbReference type="ChEBI" id="CHEBI:29108"/>
        <label>2</label>
    </ligand>
</feature>
<feature type="binding site" evidence="1">
    <location>
        <position position="128"/>
    </location>
    <ligand>
        <name>Ca(2+)</name>
        <dbReference type="ChEBI" id="CHEBI:29108"/>
        <label>3</label>
    </ligand>
</feature>
<feature type="binding site" evidence="1">
    <location>
        <position position="130"/>
    </location>
    <ligand>
        <name>Ca(2+)</name>
        <dbReference type="ChEBI" id="CHEBI:29108"/>
        <label>3</label>
    </ligand>
</feature>
<feature type="binding site" evidence="1">
    <location>
        <position position="132"/>
    </location>
    <ligand>
        <name>Ca(2+)</name>
        <dbReference type="ChEBI" id="CHEBI:29108"/>
        <label>3</label>
    </ligand>
</feature>
<feature type="binding site" evidence="1">
    <location>
        <position position="139"/>
    </location>
    <ligand>
        <name>Ca(2+)</name>
        <dbReference type="ChEBI" id="CHEBI:29108"/>
        <label>3</label>
    </ligand>
</feature>
<proteinExistence type="predicted"/>
<gene>
    <name type="primary">cex-1</name>
    <name type="ORF">F56D1.6</name>
</gene>
<accession>Q10131</accession>
<organism>
    <name type="scientific">Caenorhabditis elegans</name>
    <dbReference type="NCBI Taxonomy" id="6239"/>
    <lineage>
        <taxon>Eukaryota</taxon>
        <taxon>Metazoa</taxon>
        <taxon>Ecdysozoa</taxon>
        <taxon>Nematoda</taxon>
        <taxon>Chromadorea</taxon>
        <taxon>Rhabditida</taxon>
        <taxon>Rhabditina</taxon>
        <taxon>Rhabditomorpha</taxon>
        <taxon>Rhabditoidea</taxon>
        <taxon>Rhabditidae</taxon>
        <taxon>Peloderinae</taxon>
        <taxon>Caenorhabditis</taxon>
    </lineage>
</organism>
<reference key="1">
    <citation type="journal article" date="1998" name="Science">
        <title>Genome sequence of the nematode C. elegans: a platform for investigating biology.</title>
        <authorList>
            <consortium name="The C. elegans sequencing consortium"/>
        </authorList>
    </citation>
    <scope>NUCLEOTIDE SEQUENCE [LARGE SCALE GENOMIC DNA]</scope>
    <source>
        <strain>Bristol N2</strain>
    </source>
</reference>
<dbReference type="EMBL" id="FO081078">
    <property type="protein sequence ID" value="CCD68961.1"/>
    <property type="molecule type" value="Genomic_DNA"/>
</dbReference>
<dbReference type="PIR" id="T30109">
    <property type="entry name" value="T30109"/>
</dbReference>
<dbReference type="RefSeq" id="NP_495034.1">
    <property type="nucleotide sequence ID" value="NM_062633.2"/>
</dbReference>
<dbReference type="SMR" id="Q10131"/>
<dbReference type="BioGRID" id="51118">
    <property type="interactions" value="12"/>
</dbReference>
<dbReference type="STRING" id="6239.F56D1.6.1"/>
<dbReference type="PaxDb" id="6239-F56D1.6"/>
<dbReference type="PeptideAtlas" id="Q10131"/>
<dbReference type="EnsemblMetazoa" id="F56D1.6.1">
    <property type="protein sequence ID" value="F56D1.6.1"/>
    <property type="gene ID" value="WBGene00023407"/>
</dbReference>
<dbReference type="GeneID" id="186376"/>
<dbReference type="KEGG" id="cel:CELE_F56D1.6"/>
<dbReference type="UCSC" id="F56D1.6">
    <property type="organism name" value="c. elegans"/>
</dbReference>
<dbReference type="AGR" id="WB:WBGene00023407"/>
<dbReference type="CTD" id="186376"/>
<dbReference type="WormBase" id="F56D1.6">
    <property type="protein sequence ID" value="CE01974"/>
    <property type="gene ID" value="WBGene00023407"/>
    <property type="gene designation" value="cex-1"/>
</dbReference>
<dbReference type="eggNOG" id="ENOG502RYZK">
    <property type="taxonomic scope" value="Eukaryota"/>
</dbReference>
<dbReference type="GeneTree" id="ENSGT01010000222360"/>
<dbReference type="HOGENOM" id="CLU_096804_2_0_1"/>
<dbReference type="InParanoid" id="Q10131"/>
<dbReference type="OMA" id="ETHEIMI"/>
<dbReference type="OrthoDB" id="9974725at2759"/>
<dbReference type="PhylomeDB" id="Q10131"/>
<dbReference type="PRO" id="PR:Q10131"/>
<dbReference type="Proteomes" id="UP000001940">
    <property type="component" value="Chromosome II"/>
</dbReference>
<dbReference type="Bgee" id="WBGene00023407">
    <property type="expression patterns" value="Expressed in larva and 3 other cell types or tissues"/>
</dbReference>
<dbReference type="GO" id="GO:0005509">
    <property type="term" value="F:calcium ion binding"/>
    <property type="evidence" value="ECO:0007669"/>
    <property type="project" value="InterPro"/>
</dbReference>
<dbReference type="FunFam" id="1.10.238.10:FF:000495">
    <property type="entry name" value="Protein CBR-CEX-1"/>
    <property type="match status" value="1"/>
</dbReference>
<dbReference type="Gene3D" id="1.10.238.10">
    <property type="entry name" value="EF-hand"/>
    <property type="match status" value="1"/>
</dbReference>
<dbReference type="InterPro" id="IPR011992">
    <property type="entry name" value="EF-hand-dom_pair"/>
</dbReference>
<dbReference type="InterPro" id="IPR018247">
    <property type="entry name" value="EF_Hand_1_Ca_BS"/>
</dbReference>
<dbReference type="InterPro" id="IPR002048">
    <property type="entry name" value="EF_hand_dom"/>
</dbReference>
<dbReference type="SUPFAM" id="SSF47473">
    <property type="entry name" value="EF-hand"/>
    <property type="match status" value="1"/>
</dbReference>
<dbReference type="PROSITE" id="PS00018">
    <property type="entry name" value="EF_HAND_1"/>
    <property type="match status" value="3"/>
</dbReference>
<dbReference type="PROSITE" id="PS50222">
    <property type="entry name" value="EF_HAND_2"/>
    <property type="match status" value="3"/>
</dbReference>
<name>CEX1_CAEEL</name>
<keyword id="KW-0106">Calcium</keyword>
<keyword id="KW-0479">Metal-binding</keyword>
<keyword id="KW-1185">Reference proteome</keyword>
<keyword id="KW-0677">Repeat</keyword>
<sequence>MVVAKPTAAVSIEDLIKKHSDVDPFLVKKWERIFSLFFDRNASHQVDWGDFYLVVKKVRDIYGAESVQTGFAKKSLAALWEGLCSIADADKDQLISIDEWIGLLKKTDAKTEPKWFKDYQNFMFKLFDVSCDGVMDLAEYTDGMSTYGFDQSECDAAFHKFSVDKKGQYVPQMKPETWNTYFHQLFYSTNKSDVGNHLFGIIDF</sequence>
<evidence type="ECO:0000255" key="1">
    <source>
        <dbReference type="PROSITE-ProRule" id="PRU00448"/>
    </source>
</evidence>